<dbReference type="EMBL" id="J03458">
    <property type="protein sequence ID" value="AAA75559.1"/>
    <property type="molecule type" value="mRNA"/>
</dbReference>
<dbReference type="PIR" id="A28444">
    <property type="entry name" value="A28444"/>
</dbReference>
<dbReference type="FunCoup" id="P11088">
    <property type="interactions" value="2"/>
</dbReference>
<dbReference type="PhosphoSitePlus" id="P11088"/>
<dbReference type="ProteomicsDB" id="267588"/>
<dbReference type="AGR" id="MGI:95553"/>
<dbReference type="MGI" id="MGI:95553">
    <property type="gene designation" value="Flg"/>
</dbReference>
<dbReference type="InParanoid" id="P11088"/>
<dbReference type="OrthoDB" id="9909924at2759"/>
<dbReference type="ChiTaRS" id="Flg">
    <property type="organism name" value="mouse"/>
</dbReference>
<dbReference type="Proteomes" id="UP000000589">
    <property type="component" value="Unplaced"/>
</dbReference>
<dbReference type="RNAct" id="P11088">
    <property type="molecule type" value="protein"/>
</dbReference>
<dbReference type="GO" id="GO:0001533">
    <property type="term" value="C:cornified envelope"/>
    <property type="evidence" value="ECO:0000314"/>
    <property type="project" value="MGI"/>
</dbReference>
<dbReference type="GO" id="GO:0036457">
    <property type="term" value="C:keratohyalin granule"/>
    <property type="evidence" value="ECO:0000314"/>
    <property type="project" value="MGI"/>
</dbReference>
<dbReference type="GO" id="GO:1990254">
    <property type="term" value="F:keratin filament binding"/>
    <property type="evidence" value="ECO:0000314"/>
    <property type="project" value="MGI"/>
</dbReference>
<dbReference type="GO" id="GO:0030280">
    <property type="term" value="F:structural constituent of skin epidermis"/>
    <property type="evidence" value="ECO:0000314"/>
    <property type="project" value="MGI"/>
</dbReference>
<dbReference type="GO" id="GO:0008544">
    <property type="term" value="P:epidermis development"/>
    <property type="evidence" value="ECO:0000315"/>
    <property type="project" value="MGI"/>
</dbReference>
<dbReference type="GO" id="GO:0061436">
    <property type="term" value="P:establishment of skin barrier"/>
    <property type="evidence" value="ECO:0000315"/>
    <property type="project" value="MGI"/>
</dbReference>
<dbReference type="GO" id="GO:0045109">
    <property type="term" value="P:intermediate filament organization"/>
    <property type="evidence" value="ECO:0000314"/>
    <property type="project" value="MGI"/>
</dbReference>
<sequence>PDGSGRSSNRRDRPRQLSPSQSSDSQVHSGVQVEGRRGHSSSANRRAGSSSGSGVQGASAGGLAADASRRSGARQGQASAQGRAGSQGQAQGRVSSSADRQGRRGVSESRASDSEGHSDFSEGQAVGAHRQSGAGQRHEQRSSRGQHGSGYYYEQEHSEEESDSQHQHGHQHEQQRGHQHQHQHQHEHEQPESGHRQQQSSGRGHQGAHQEQGRDSARPRGSNQGHSSSRHQADSPRVSARSGSGGRGQSPDASGRSSNRRDRPRQPSPSQSSDSQVHSGVQVEAQRGQSSSANRRAGSSSGSGVQGAAASGQGGYESIFTAKHLDFNQSHSYYYY</sequence>
<accession>P11088</accession>
<gene>
    <name type="primary">Flg</name>
</gene>
<organism>
    <name type="scientific">Mus musculus</name>
    <name type="common">Mouse</name>
    <dbReference type="NCBI Taxonomy" id="10090"/>
    <lineage>
        <taxon>Eukaryota</taxon>
        <taxon>Metazoa</taxon>
        <taxon>Chordata</taxon>
        <taxon>Craniata</taxon>
        <taxon>Vertebrata</taxon>
        <taxon>Euteleostomi</taxon>
        <taxon>Mammalia</taxon>
        <taxon>Eutheria</taxon>
        <taxon>Euarchontoglires</taxon>
        <taxon>Glires</taxon>
        <taxon>Rodentia</taxon>
        <taxon>Myomorpha</taxon>
        <taxon>Muroidea</taxon>
        <taxon>Muridae</taxon>
        <taxon>Murinae</taxon>
        <taxon>Mus</taxon>
        <taxon>Mus</taxon>
    </lineage>
</organism>
<comment type="function">
    <text>Aggregates keratin intermediate filaments and promotes disulfide-bond formation among the intermediate filaments during terminal differentiation of mammalian epidermis.</text>
</comment>
<comment type="subcellular location">
    <subcellularLocation>
        <location evidence="5">Cytoplasmic granule</location>
    </subcellularLocation>
    <text evidence="1">In the stratum granulosum of the epidermis, localized within keratohyalin granules. In granular keratinocytes and in lower corneocytes, colocalizes with calpain-1/CAPN1 (By similarity).</text>
</comment>
<comment type="tissue specificity">
    <text evidence="3 5 6">Expressed in the granular layer of the epidermis (at protein level) (PubMed:3680218, PubMed:6174530). Expressed in the epidermis of the ear (at protein level) (PubMed:24751727).</text>
</comment>
<comment type="developmental stage">
    <text evidence="4">Expressed in the epidermis at birth (at protein level).</text>
</comment>
<comment type="PTM">
    <text>Filaggrin is initially synthesized as a large, insoluble, highly phosphorylated precursor containing many tandem copies of 248 AA, which are not separated by large linker sequences. During terminal differentiation it is dephosphorylated and proteolytically cleaved.</text>
</comment>
<comment type="similarity">
    <text evidence="7">Belongs to the S100-fused protein family.</text>
</comment>
<evidence type="ECO:0000250" key="1">
    <source>
        <dbReference type="UniProtKB" id="P20930"/>
    </source>
</evidence>
<evidence type="ECO:0000256" key="2">
    <source>
        <dbReference type="SAM" id="MobiDB-lite"/>
    </source>
</evidence>
<evidence type="ECO:0000269" key="3">
    <source>
    </source>
</evidence>
<evidence type="ECO:0000269" key="4">
    <source>
    </source>
</evidence>
<evidence type="ECO:0000269" key="5">
    <source>
    </source>
</evidence>
<evidence type="ECO:0000269" key="6">
    <source>
    </source>
</evidence>
<evidence type="ECO:0000305" key="7"/>
<feature type="chain" id="PRO_0000144037" description="Filaggrin">
    <location>
        <begin position="1" status="less than"/>
        <end position="336"/>
    </location>
</feature>
<feature type="region of interest" description="Disordered" evidence="2">
    <location>
        <begin position="1"/>
        <end position="313"/>
    </location>
</feature>
<feature type="compositionally biased region" description="Low complexity" evidence="2">
    <location>
        <begin position="16"/>
        <end position="26"/>
    </location>
</feature>
<feature type="compositionally biased region" description="Low complexity" evidence="2">
    <location>
        <begin position="40"/>
        <end position="66"/>
    </location>
</feature>
<feature type="compositionally biased region" description="Low complexity" evidence="2">
    <location>
        <begin position="73"/>
        <end position="98"/>
    </location>
</feature>
<feature type="compositionally biased region" description="Basic and acidic residues" evidence="2">
    <location>
        <begin position="100"/>
        <end position="120"/>
    </location>
</feature>
<feature type="compositionally biased region" description="Basic and acidic residues" evidence="2">
    <location>
        <begin position="163"/>
        <end position="176"/>
    </location>
</feature>
<feature type="compositionally biased region" description="Basic and acidic residues" evidence="2">
    <location>
        <begin position="184"/>
        <end position="195"/>
    </location>
</feature>
<feature type="compositionally biased region" description="Low complexity" evidence="2">
    <location>
        <begin position="285"/>
        <end position="311"/>
    </location>
</feature>
<feature type="non-terminal residue">
    <location>
        <position position="1"/>
    </location>
</feature>
<keyword id="KW-0217">Developmental protein</keyword>
<keyword id="KW-0597">Phosphoprotein</keyword>
<keyword id="KW-1185">Reference proteome</keyword>
<proteinExistence type="evidence at protein level"/>
<protein>
    <recommendedName>
        <fullName>Filaggrin</fullName>
    </recommendedName>
</protein>
<name>FILA_MOUSE</name>
<reference key="1">
    <citation type="journal article" date="1987" name="J. Biol. Chem.">
        <title>The gene for mouse epidermal filaggrin precursor. Its partial characterization, expression, and sequence of a repeating filaggrin unit.</title>
        <authorList>
            <person name="Rothnagel J.A."/>
            <person name="Mehrel T."/>
            <person name="Idler W.W."/>
            <person name="Roop D.R."/>
            <person name="Steinert P.M."/>
        </authorList>
    </citation>
    <scope>NUCLEOTIDE SEQUENCE [MRNA]</scope>
    <scope>TISSUE SPECIFICITY</scope>
</reference>
<reference key="2">
    <citation type="submission" date="1988-09" db="EMBL/GenBank/DDBJ databases">
        <authorList>
            <person name="Rothnagel J.A."/>
        </authorList>
    </citation>
    <scope>SEQUENCE REVISION</scope>
</reference>
<reference key="3">
    <citation type="journal article" date="1982" name="J. Cell Biol.">
        <title>Abnormal epidermal keratinization in the repeated epilation mutant mouse.</title>
        <authorList>
            <person name="Holbrook K.A."/>
            <person name="Dale B.A."/>
            <person name="Brown K.S."/>
        </authorList>
    </citation>
    <scope>TISSUE SPECIFICITY</scope>
</reference>
<reference key="4">
    <citation type="journal article" date="2014" name="Biochem. J.">
        <title>TMPRSS13 deficiency impairs stratum corneum formation and epidermal barrier acquisition.</title>
        <authorList>
            <person name="Madsen D.H."/>
            <person name="Szabo R."/>
            <person name="Molinolo A.A."/>
            <person name="Bugge T.H."/>
        </authorList>
    </citation>
    <scope>DEVELOPMENTAL STAGE</scope>
</reference>
<reference key="5">
    <citation type="journal article" date="2014" name="J. Invest. Dermatol.">
        <title>Loss of keratin K2 expression causes aberrant aggregation of K10, hyperkeratosis, and inflammation.</title>
        <authorList>
            <person name="Fischer H."/>
            <person name="Langbein L."/>
            <person name="Reichelt J."/>
            <person name="Praetzel-Wunder S."/>
            <person name="Buchberger M."/>
            <person name="Ghannadan M."/>
            <person name="Tschachler E."/>
            <person name="Eckhart L."/>
        </authorList>
    </citation>
    <scope>TISSUE SPECIFICITY</scope>
</reference>